<protein>
    <recommendedName>
        <fullName>Orotidine 5'-phosphate decarboxylase</fullName>
        <ecNumber>4.1.1.23</ecNumber>
    </recommendedName>
    <alternativeName>
        <fullName>OMP decarboxylase</fullName>
        <shortName>OMPDCase</shortName>
        <shortName>OMPdecase</shortName>
    </alternativeName>
</protein>
<evidence type="ECO:0000269" key="1">
    <source>
    </source>
</evidence>
<evidence type="ECO:0000269" key="2">
    <source>
    </source>
</evidence>
<evidence type="ECO:0000269" key="3">
    <source>
    </source>
</evidence>
<evidence type="ECO:0000269" key="4">
    <source>
    </source>
</evidence>
<evidence type="ECO:0000305" key="5"/>
<evidence type="ECO:0007829" key="6">
    <source>
        <dbReference type="PDB" id="3LI0"/>
    </source>
</evidence>
<evidence type="ECO:0007829" key="7">
    <source>
        <dbReference type="PDB" id="3W07"/>
    </source>
</evidence>
<evidence type="ECO:0007829" key="8">
    <source>
        <dbReference type="PDB" id="4NT0"/>
    </source>
</evidence>
<sequence>MRSRRVDVMDVMNRLILAMDLMNRDDALRVTGEVREYIDTVKIGYPLVLSEGMDIIAEFRKRFGCRIIADFKVADIPETNEKICRATFKAGADAIIVHGFRGADSVRACLNVAEEMGREVFLLTEMSHPGAEMFIQGAADEIARMGVDLGVKNYVGPSTRPERLSRLREIIGQDSFLISPGVGAQGGDPGETLRFADAIIVGRSIYLADNPAAAAAGIIESIKDLLNP</sequence>
<feature type="chain" id="PRO_0000134612" description="Orotidine 5'-phosphate decarboxylase">
    <location>
        <begin position="1"/>
        <end position="228"/>
    </location>
</feature>
<feature type="active site" description="Proton donor">
    <location>
        <position position="72"/>
    </location>
</feature>
<feature type="binding site">
    <location>
        <position position="20"/>
    </location>
    <ligand>
        <name>substrate</name>
    </ligand>
</feature>
<feature type="binding site">
    <location>
        <position position="42"/>
    </location>
    <ligand>
        <name>substrate</name>
    </ligand>
</feature>
<feature type="binding site">
    <location>
        <begin position="70"/>
        <end position="79"/>
    </location>
    <ligand>
        <name>substrate</name>
    </ligand>
</feature>
<feature type="binding site">
    <location>
        <position position="127"/>
    </location>
    <ligand>
        <name>substrate</name>
    </ligand>
</feature>
<feature type="binding site">
    <location>
        <begin position="180"/>
        <end position="190"/>
    </location>
    <ligand>
        <name>substrate</name>
    </ligand>
</feature>
<feature type="binding site">
    <location>
        <position position="202"/>
    </location>
    <ligand>
        <name>substrate</name>
    </ligand>
</feature>
<feature type="binding site">
    <location>
        <position position="203"/>
    </location>
    <ligand>
        <name>substrate</name>
    </ligand>
</feature>
<feature type="strand" evidence="6">
    <location>
        <begin position="6"/>
        <end position="8"/>
    </location>
</feature>
<feature type="helix" evidence="7">
    <location>
        <begin position="12"/>
        <end position="14"/>
    </location>
</feature>
<feature type="strand" evidence="7">
    <location>
        <begin position="15"/>
        <end position="19"/>
    </location>
</feature>
<feature type="helix" evidence="7">
    <location>
        <begin position="24"/>
        <end position="34"/>
    </location>
</feature>
<feature type="helix" evidence="7">
    <location>
        <begin position="35"/>
        <end position="37"/>
    </location>
</feature>
<feature type="strand" evidence="7">
    <location>
        <begin position="39"/>
        <end position="44"/>
    </location>
</feature>
<feature type="helix" evidence="7">
    <location>
        <begin position="45"/>
        <end position="51"/>
    </location>
</feature>
<feature type="helix" evidence="7">
    <location>
        <begin position="54"/>
        <end position="63"/>
    </location>
</feature>
<feature type="strand" evidence="7">
    <location>
        <begin position="66"/>
        <end position="73"/>
    </location>
</feature>
<feature type="helix" evidence="7">
    <location>
        <begin position="77"/>
        <end position="89"/>
    </location>
</feature>
<feature type="strand" evidence="7">
    <location>
        <begin position="93"/>
        <end position="99"/>
    </location>
</feature>
<feature type="helix" evidence="7">
    <location>
        <begin position="103"/>
        <end position="116"/>
    </location>
</feature>
<feature type="strand" evidence="7">
    <location>
        <begin position="119"/>
        <end position="123"/>
    </location>
</feature>
<feature type="helix" evidence="7">
    <location>
        <begin position="129"/>
        <end position="132"/>
    </location>
</feature>
<feature type="helix" evidence="7">
    <location>
        <begin position="135"/>
        <end position="149"/>
    </location>
</feature>
<feature type="strand" evidence="7">
    <location>
        <begin position="153"/>
        <end position="155"/>
    </location>
</feature>
<feature type="strand" evidence="8">
    <location>
        <begin position="158"/>
        <end position="160"/>
    </location>
</feature>
<feature type="helix" evidence="7">
    <location>
        <begin position="161"/>
        <end position="171"/>
    </location>
</feature>
<feature type="strand" evidence="7">
    <location>
        <begin position="173"/>
        <end position="179"/>
    </location>
</feature>
<feature type="helix" evidence="7">
    <location>
        <begin position="189"/>
        <end position="192"/>
    </location>
</feature>
<feature type="turn" evidence="7">
    <location>
        <begin position="193"/>
        <end position="195"/>
    </location>
</feature>
<feature type="strand" evidence="7">
    <location>
        <begin position="197"/>
        <end position="201"/>
    </location>
</feature>
<feature type="helix" evidence="7">
    <location>
        <begin position="203"/>
        <end position="206"/>
    </location>
</feature>
<feature type="strand" evidence="7">
    <location>
        <begin position="208"/>
        <end position="210"/>
    </location>
</feature>
<feature type="helix" evidence="7">
    <location>
        <begin position="211"/>
        <end position="224"/>
    </location>
</feature>
<comment type="function">
    <text>Catalyzes the decarboxylation of orotidine 5'-monophosphate (OMP) to uridine 5'-monophosphate (UMP).</text>
</comment>
<comment type="catalytic activity">
    <reaction>
        <text>orotidine 5'-phosphate + H(+) = UMP + CO2</text>
        <dbReference type="Rhea" id="RHEA:11596"/>
        <dbReference type="ChEBI" id="CHEBI:15378"/>
        <dbReference type="ChEBI" id="CHEBI:16526"/>
        <dbReference type="ChEBI" id="CHEBI:57538"/>
        <dbReference type="ChEBI" id="CHEBI:57865"/>
        <dbReference type="EC" id="4.1.1.23"/>
    </reaction>
</comment>
<comment type="pathway">
    <text>Pyrimidine metabolism; UMP biosynthesis via de novo pathway; UMP from orotate: step 2/2.</text>
</comment>
<comment type="subunit">
    <text evidence="1 2 3 4">Homodimer.</text>
</comment>
<comment type="similarity">
    <text evidence="5">Belongs to the OMP decarboxylase family. Type 1 subfamily.</text>
</comment>
<name>PYRF_METTH</name>
<reference key="1">
    <citation type="journal article" date="1997" name="J. Bacteriol.">
        <title>Complete genome sequence of Methanobacterium thermoautotrophicum deltaH: functional analysis and comparative genomics.</title>
        <authorList>
            <person name="Smith D.R."/>
            <person name="Doucette-Stamm L.A."/>
            <person name="Deloughery C."/>
            <person name="Lee H.-M."/>
            <person name="Dubois J."/>
            <person name="Aldredge T."/>
            <person name="Bashirzadeh R."/>
            <person name="Blakely D."/>
            <person name="Cook R."/>
            <person name="Gilbert K."/>
            <person name="Harrison D."/>
            <person name="Hoang L."/>
            <person name="Keagle P."/>
            <person name="Lumm W."/>
            <person name="Pothier B."/>
            <person name="Qiu D."/>
            <person name="Spadafora R."/>
            <person name="Vicare R."/>
            <person name="Wang Y."/>
            <person name="Wierzbowski J."/>
            <person name="Gibson R."/>
            <person name="Jiwani N."/>
            <person name="Caruso A."/>
            <person name="Bush D."/>
            <person name="Safer H."/>
            <person name="Patwell D."/>
            <person name="Prabhakar S."/>
            <person name="McDougall S."/>
            <person name="Shimer G."/>
            <person name="Goyal A."/>
            <person name="Pietrovski S."/>
            <person name="Church G.M."/>
            <person name="Daniels C.J."/>
            <person name="Mao J.-I."/>
            <person name="Rice P."/>
            <person name="Noelling J."/>
            <person name="Reeve J.N."/>
        </authorList>
    </citation>
    <scope>NUCLEOTIDE SEQUENCE [LARGE SCALE GENOMIC DNA]</scope>
    <source>
        <strain>ATCC 29096 / DSM 1053 / JCM 10044 / NBRC 100330 / Delta H</strain>
    </source>
</reference>
<reference key="2">
    <citation type="journal article" date="2000" name="Acta Crystallogr. D">
        <title>Purification, crystallization and preliminary X-ray study of orotidine 5'-monophosphate decarboxylase.</title>
        <authorList>
            <person name="Wu N."/>
            <person name="Christendat D."/>
            <person name="Dharamsi A."/>
            <person name="Pai E.F."/>
        </authorList>
    </citation>
    <scope>CRYSTALLIZATION</scope>
    <source>
        <strain>ATCC 29096 / DSM 1053 / JCM 10044 / NBRC 100330 / Delta H</strain>
    </source>
</reference>
<reference key="3">
    <citation type="journal article" date="2000" name="Proc. Natl. Acad. Sci. U.S.A.">
        <title>Electrostatic stress in catalysis: structure and mechanism of the enzyme orotidine monophosphate decarboxylase.</title>
        <authorList>
            <person name="Wu N."/>
            <person name="Mo Y."/>
            <person name="Gao J."/>
            <person name="Pai E.F."/>
        </authorList>
    </citation>
    <scope>X-RAY CRYSTALLOGRAPHY (1.5 ANGSTROMS) OF NATIVE PROTEIN AND COMPLEX WITH 6-AZAUMP</scope>
    <scope>SUBUNIT</scope>
    <source>
        <strain>ATCC 29096 / DSM 1053 / JCM 10044 / NBRC 100330 / Delta H</strain>
    </source>
</reference>
<reference key="4">
    <citation type="journal article" date="2002" name="Biochemistry">
        <title>Mapping the active site-ligand interactions of orotidine 5'-monophosphate decarboxylase by crystallography.</title>
        <authorList>
            <person name="Wu N."/>
            <person name="Gillon W."/>
            <person name="Pai E.F."/>
        </authorList>
    </citation>
    <scope>X-RAY CRYSTALLOGRAPHY (1.5 ANGSTROMS) OF MUTANTS ALA-42; GLY-70; ALA-70; ALA-72; ALA-70/ALA-72; ASN-75; ALA-127 AND ALA-185 IN COMPLEX WITH DIFFERENT LIGANDS</scope>
    <scope>SUBUNIT</scope>
    <source>
        <strain>ATCC 29096 / DSM 1053 / JCM 10044 / NBRC 100330 / Delta H</strain>
    </source>
</reference>
<reference key="5">
    <citation type="journal article" date="2002" name="J. Biol. Chem.">
        <title>Crystal structures of inhibitor complexes reveal an alternate binding mode in orotidine-5'-monophosphate decarboxylase.</title>
        <authorList>
            <person name="Wu N."/>
            <person name="Pai E.F."/>
        </authorList>
    </citation>
    <scope>X-RAY CRYSTALLOGRAPHY (1.5 ANGSTROMS) OF COMPLEXES WITH BMP; CMP; UMP; XMP AND OF MUTANT DELTA ALA-203 IN COMPLEX WITH 6-AZAUMP</scope>
    <scope>SUBUNIT</scope>
    <source>
        <strain>ATCC 29096 / DSM 1053 / JCM 10044 / NBRC 100330 / Delta H</strain>
    </source>
</reference>
<reference key="6">
    <citation type="journal article" date="2005" name="J. Am. Chem. Soc.">
        <title>An unprecedented twist to ODCase catalytic activity.</title>
        <authorList>
            <person name="Fujihashi M."/>
            <person name="Bello A.M."/>
            <person name="Poduch E."/>
            <person name="Wei L."/>
            <person name="Annedi S.C."/>
            <person name="Pai E.F."/>
            <person name="Kotra L.P."/>
        </authorList>
    </citation>
    <scope>X-RAY CRYSTALLOGRAPHY (1.45 ANGSTROMS) OF COMPLEX WITH BMP</scope>
    <scope>SUBUNIT</scope>
    <source>
        <strain>ATCC 29096 / DSM 1053 / JCM 10044 / NBRC 100330 / Delta H</strain>
    </source>
</reference>
<proteinExistence type="evidence at protein level"/>
<accession>O26232</accession>
<gene>
    <name type="primary">pyrF</name>
    <name type="ordered locus">MTH_129</name>
</gene>
<dbReference type="EC" id="4.1.1.23"/>
<dbReference type="EMBL" id="AE000666">
    <property type="protein sequence ID" value="AAB84635.1"/>
    <property type="molecule type" value="Genomic_DNA"/>
</dbReference>
<dbReference type="PIR" id="F69038">
    <property type="entry name" value="F69038"/>
</dbReference>
<dbReference type="PDB" id="1DV7">
    <property type="method" value="X-ray"/>
    <property type="resolution" value="1.80 A"/>
    <property type="chains" value="A=2-228"/>
</dbReference>
<dbReference type="PDB" id="1DVJ">
    <property type="method" value="X-ray"/>
    <property type="resolution" value="1.50 A"/>
    <property type="chains" value="A/B/C/D=2-226"/>
</dbReference>
<dbReference type="PDB" id="1KLY">
    <property type="method" value="X-ray"/>
    <property type="resolution" value="1.50 A"/>
    <property type="chains" value="A=1-228"/>
</dbReference>
<dbReference type="PDB" id="1KLZ">
    <property type="method" value="X-ray"/>
    <property type="resolution" value="1.50 A"/>
    <property type="chains" value="A=1-228"/>
</dbReference>
<dbReference type="PDB" id="1KM0">
    <property type="method" value="X-ray"/>
    <property type="resolution" value="1.70 A"/>
    <property type="chains" value="A/B/C/D=1-226"/>
</dbReference>
<dbReference type="PDB" id="1KM1">
    <property type="method" value="X-ray"/>
    <property type="resolution" value="1.60 A"/>
    <property type="chains" value="A/B=1-226"/>
</dbReference>
<dbReference type="PDB" id="1KM2">
    <property type="method" value="X-ray"/>
    <property type="resolution" value="1.50 A"/>
    <property type="chains" value="A=1-226"/>
</dbReference>
<dbReference type="PDB" id="1KM3">
    <property type="method" value="X-ray"/>
    <property type="resolution" value="1.50 A"/>
    <property type="chains" value="A=1-226"/>
</dbReference>
<dbReference type="PDB" id="1KM4">
    <property type="method" value="X-ray"/>
    <property type="resolution" value="1.50 A"/>
    <property type="chains" value="A=1-226"/>
</dbReference>
<dbReference type="PDB" id="1KM5">
    <property type="method" value="X-ray"/>
    <property type="resolution" value="1.50 A"/>
    <property type="chains" value="A=1-226"/>
</dbReference>
<dbReference type="PDB" id="1KM6">
    <property type="method" value="X-ray"/>
    <property type="resolution" value="1.50 A"/>
    <property type="chains" value="A=1-226"/>
</dbReference>
<dbReference type="PDB" id="1LOL">
    <property type="method" value="X-ray"/>
    <property type="resolution" value="1.90 A"/>
    <property type="chains" value="A/B=1-226"/>
</dbReference>
<dbReference type="PDB" id="1LOQ">
    <property type="method" value="X-ray"/>
    <property type="resolution" value="1.50 A"/>
    <property type="chains" value="A=1-228"/>
</dbReference>
<dbReference type="PDB" id="1LOR">
    <property type="method" value="X-ray"/>
    <property type="resolution" value="1.60 A"/>
    <property type="chains" value="A=1-228"/>
</dbReference>
<dbReference type="PDB" id="1LOS">
    <property type="method" value="X-ray"/>
    <property type="resolution" value="1.90 A"/>
    <property type="chains" value="A/B/C/D=1-228"/>
</dbReference>
<dbReference type="PDB" id="1LP6">
    <property type="method" value="X-ray"/>
    <property type="resolution" value="1.90 A"/>
    <property type="chains" value="A/B=1-226"/>
</dbReference>
<dbReference type="PDB" id="1X1Z">
    <property type="method" value="X-ray"/>
    <property type="resolution" value="1.45 A"/>
    <property type="chains" value="A/B=1-228"/>
</dbReference>
<dbReference type="PDB" id="2E6Y">
    <property type="method" value="X-ray"/>
    <property type="resolution" value="1.60 A"/>
    <property type="chains" value="A/B=1-228"/>
</dbReference>
<dbReference type="PDB" id="2ZZ1">
    <property type="method" value="X-ray"/>
    <property type="resolution" value="1.57 A"/>
    <property type="chains" value="A/B=1-228"/>
</dbReference>
<dbReference type="PDB" id="2ZZ2">
    <property type="method" value="X-ray"/>
    <property type="resolution" value="1.53 A"/>
    <property type="chains" value="A/B=1-228"/>
</dbReference>
<dbReference type="PDB" id="2ZZ3">
    <property type="method" value="X-ray"/>
    <property type="resolution" value="1.80 A"/>
    <property type="chains" value="A/B=1-228"/>
</dbReference>
<dbReference type="PDB" id="2ZZ4">
    <property type="method" value="X-ray"/>
    <property type="resolution" value="1.67 A"/>
    <property type="chains" value="A/B=1-228"/>
</dbReference>
<dbReference type="PDB" id="2ZZ5">
    <property type="method" value="X-ray"/>
    <property type="resolution" value="1.56 A"/>
    <property type="chains" value="A/B=1-228"/>
</dbReference>
<dbReference type="PDB" id="2ZZ6">
    <property type="method" value="X-ray"/>
    <property type="resolution" value="1.66 A"/>
    <property type="chains" value="A/B=1-228"/>
</dbReference>
<dbReference type="PDB" id="2ZZ7">
    <property type="method" value="X-ray"/>
    <property type="resolution" value="1.58 A"/>
    <property type="chains" value="A=1-228"/>
</dbReference>
<dbReference type="PDB" id="3G18">
    <property type="method" value="X-ray"/>
    <property type="resolution" value="1.60 A"/>
    <property type="chains" value="A/B=1-228"/>
</dbReference>
<dbReference type="PDB" id="3G1A">
    <property type="method" value="X-ray"/>
    <property type="resolution" value="1.50 A"/>
    <property type="chains" value="A/B=1-228"/>
</dbReference>
<dbReference type="PDB" id="3G1D">
    <property type="method" value="X-ray"/>
    <property type="resolution" value="1.50 A"/>
    <property type="chains" value="A/B=1-228"/>
</dbReference>
<dbReference type="PDB" id="3G1F">
    <property type="method" value="X-ray"/>
    <property type="resolution" value="2.50 A"/>
    <property type="chains" value="A/B/C/D/E/F/G/H/I/J/K/L/M=1-228"/>
</dbReference>
<dbReference type="PDB" id="3G1H">
    <property type="method" value="X-ray"/>
    <property type="resolution" value="2.30 A"/>
    <property type="chains" value="A/B/C/D/E/F/G/H/I/J/K/L/M=1-228"/>
</dbReference>
<dbReference type="PDB" id="3G1S">
    <property type="method" value="X-ray"/>
    <property type="resolution" value="1.40 A"/>
    <property type="chains" value="A/B=1-228"/>
</dbReference>
<dbReference type="PDB" id="3G1V">
    <property type="method" value="X-ray"/>
    <property type="resolution" value="1.30 A"/>
    <property type="chains" value="A/B=1-228"/>
</dbReference>
<dbReference type="PDB" id="3G1X">
    <property type="method" value="X-ray"/>
    <property type="resolution" value="1.55 A"/>
    <property type="chains" value="A/B=1-228"/>
</dbReference>
<dbReference type="PDB" id="3G1Y">
    <property type="method" value="X-ray"/>
    <property type="resolution" value="1.40 A"/>
    <property type="chains" value="A/B=1-228"/>
</dbReference>
<dbReference type="PDB" id="3G22">
    <property type="method" value="X-ray"/>
    <property type="resolution" value="1.50 A"/>
    <property type="chains" value="A/B=1-228"/>
</dbReference>
<dbReference type="PDB" id="3G24">
    <property type="method" value="X-ray"/>
    <property type="resolution" value="1.50 A"/>
    <property type="chains" value="A/B=1-228"/>
</dbReference>
<dbReference type="PDB" id="3LHT">
    <property type="method" value="X-ray"/>
    <property type="resolution" value="1.35 A"/>
    <property type="chains" value="A/B=1-228"/>
</dbReference>
<dbReference type="PDB" id="3LHU">
    <property type="method" value="X-ray"/>
    <property type="resolution" value="1.60 A"/>
    <property type="chains" value="A/B=1-228"/>
</dbReference>
<dbReference type="PDB" id="3LHV">
    <property type="method" value="X-ray"/>
    <property type="resolution" value="1.35 A"/>
    <property type="chains" value="A/B/C/D=1-228"/>
</dbReference>
<dbReference type="PDB" id="3LHW">
    <property type="method" value="X-ray"/>
    <property type="resolution" value="1.35 A"/>
    <property type="chains" value="A/B=1-228"/>
</dbReference>
<dbReference type="PDB" id="3LHY">
    <property type="method" value="X-ray"/>
    <property type="resolution" value="1.40 A"/>
    <property type="chains" value="A/B=1-228"/>
</dbReference>
<dbReference type="PDB" id="3LHZ">
    <property type="method" value="X-ray"/>
    <property type="resolution" value="1.40 A"/>
    <property type="chains" value="A/B=1-228"/>
</dbReference>
<dbReference type="PDB" id="3LI0">
    <property type="method" value="X-ray"/>
    <property type="resolution" value="1.50 A"/>
    <property type="chains" value="A/B=1-228"/>
</dbReference>
<dbReference type="PDB" id="3LI1">
    <property type="method" value="X-ray"/>
    <property type="resolution" value="1.35 A"/>
    <property type="chains" value="A/B=1-228"/>
</dbReference>
<dbReference type="PDB" id="3LLD">
    <property type="method" value="X-ray"/>
    <property type="resolution" value="1.45 A"/>
    <property type="chains" value="A/B=1-228"/>
</dbReference>
<dbReference type="PDB" id="3LLF">
    <property type="method" value="X-ray"/>
    <property type="resolution" value="1.30 A"/>
    <property type="chains" value="A/B=1-228"/>
</dbReference>
<dbReference type="PDB" id="3LTP">
    <property type="method" value="X-ray"/>
    <property type="resolution" value="1.40 A"/>
    <property type="chains" value="A/B=1-228"/>
</dbReference>
<dbReference type="PDB" id="3LTS">
    <property type="method" value="X-ray"/>
    <property type="resolution" value="1.43 A"/>
    <property type="chains" value="A/B=1-228"/>
</dbReference>
<dbReference type="PDB" id="3LTY">
    <property type="method" value="X-ray"/>
    <property type="resolution" value="1.50 A"/>
    <property type="chains" value="A/B=1-228"/>
</dbReference>
<dbReference type="PDB" id="3LV5">
    <property type="method" value="X-ray"/>
    <property type="resolution" value="1.44 A"/>
    <property type="chains" value="A/B=1-228"/>
</dbReference>
<dbReference type="PDB" id="3LV6">
    <property type="method" value="X-ray"/>
    <property type="resolution" value="1.45 A"/>
    <property type="chains" value="A/B=1-228"/>
</dbReference>
<dbReference type="PDB" id="3M1Z">
    <property type="method" value="X-ray"/>
    <property type="resolution" value="1.42 A"/>
    <property type="chains" value="A/B=1-228"/>
</dbReference>
<dbReference type="PDB" id="3M41">
    <property type="method" value="X-ray"/>
    <property type="resolution" value="1.40 A"/>
    <property type="chains" value="A/B=1-228"/>
</dbReference>
<dbReference type="PDB" id="3M43">
    <property type="method" value="X-ray"/>
    <property type="resolution" value="1.30 A"/>
    <property type="chains" value="A/B=1-228"/>
</dbReference>
<dbReference type="PDB" id="3M44">
    <property type="method" value="X-ray"/>
    <property type="resolution" value="1.40 A"/>
    <property type="chains" value="A/B=1-228"/>
</dbReference>
<dbReference type="PDB" id="3M47">
    <property type="method" value="X-ray"/>
    <property type="resolution" value="1.20 A"/>
    <property type="chains" value="A/B=1-228"/>
</dbReference>
<dbReference type="PDB" id="3M5X">
    <property type="method" value="X-ray"/>
    <property type="resolution" value="1.40 A"/>
    <property type="chains" value="A/B=1-228"/>
</dbReference>
<dbReference type="PDB" id="3M5Y">
    <property type="method" value="X-ray"/>
    <property type="resolution" value="1.46 A"/>
    <property type="chains" value="A/B=1-228"/>
</dbReference>
<dbReference type="PDB" id="3M5Z">
    <property type="method" value="X-ray"/>
    <property type="resolution" value="1.35 A"/>
    <property type="chains" value="A/B=1-228"/>
</dbReference>
<dbReference type="PDB" id="3NQ6">
    <property type="method" value="X-ray"/>
    <property type="resolution" value="1.49 A"/>
    <property type="chains" value="A/B=1-228"/>
</dbReference>
<dbReference type="PDB" id="3NQ7">
    <property type="method" value="X-ray"/>
    <property type="resolution" value="1.44 A"/>
    <property type="chains" value="A/B=1-228"/>
</dbReference>
<dbReference type="PDB" id="3NQA">
    <property type="method" value="X-ray"/>
    <property type="resolution" value="1.40 A"/>
    <property type="chains" value="A/B=1-228"/>
</dbReference>
<dbReference type="PDB" id="3NQC">
    <property type="method" value="X-ray"/>
    <property type="resolution" value="1.53 A"/>
    <property type="chains" value="A/B=1-228"/>
</dbReference>
<dbReference type="PDB" id="3NQD">
    <property type="method" value="X-ray"/>
    <property type="resolution" value="1.42 A"/>
    <property type="chains" value="A/B=1-228"/>
</dbReference>
<dbReference type="PDB" id="3NQE">
    <property type="method" value="X-ray"/>
    <property type="resolution" value="1.42 A"/>
    <property type="chains" value="A/B=1-228"/>
</dbReference>
<dbReference type="PDB" id="3NQF">
    <property type="method" value="X-ray"/>
    <property type="resolution" value="1.31 A"/>
    <property type="chains" value="A/B=1-228"/>
</dbReference>
<dbReference type="PDB" id="3NQG">
    <property type="method" value="X-ray"/>
    <property type="resolution" value="1.42 A"/>
    <property type="chains" value="A/B=1-228"/>
</dbReference>
<dbReference type="PDB" id="3NQM">
    <property type="method" value="X-ray"/>
    <property type="resolution" value="1.32 A"/>
    <property type="chains" value="A/B=1-228"/>
</dbReference>
<dbReference type="PDB" id="3P5Y">
    <property type="method" value="X-ray"/>
    <property type="resolution" value="1.60 A"/>
    <property type="chains" value="A/B=1-228"/>
</dbReference>
<dbReference type="PDB" id="3P5Z">
    <property type="method" value="X-ray"/>
    <property type="resolution" value="1.30 A"/>
    <property type="chains" value="A/B=1-228"/>
</dbReference>
<dbReference type="PDB" id="3P60">
    <property type="method" value="X-ray"/>
    <property type="resolution" value="1.40 A"/>
    <property type="chains" value="A/B=1-228"/>
</dbReference>
<dbReference type="PDB" id="3P61">
    <property type="method" value="X-ray"/>
    <property type="resolution" value="1.40 A"/>
    <property type="chains" value="A/B=1-228"/>
</dbReference>
<dbReference type="PDB" id="3PBU">
    <property type="method" value="X-ray"/>
    <property type="resolution" value="1.30 A"/>
    <property type="chains" value="A/B=1-228"/>
</dbReference>
<dbReference type="PDB" id="3PBV">
    <property type="method" value="X-ray"/>
    <property type="resolution" value="1.30 A"/>
    <property type="chains" value="A/B=1-228"/>
</dbReference>
<dbReference type="PDB" id="3PBW">
    <property type="method" value="X-ray"/>
    <property type="resolution" value="1.30 A"/>
    <property type="chains" value="A/B=1-228"/>
</dbReference>
<dbReference type="PDB" id="3PBY">
    <property type="method" value="X-ray"/>
    <property type="resolution" value="1.30 A"/>
    <property type="chains" value="A/B=1-228"/>
</dbReference>
<dbReference type="PDB" id="3PC0">
    <property type="method" value="X-ray"/>
    <property type="resolution" value="1.30 A"/>
    <property type="chains" value="A/B=1-228"/>
</dbReference>
<dbReference type="PDB" id="3QEZ">
    <property type="method" value="X-ray"/>
    <property type="resolution" value="1.54 A"/>
    <property type="chains" value="A/B=1-228"/>
</dbReference>
<dbReference type="PDB" id="3QF0">
    <property type="method" value="X-ray"/>
    <property type="resolution" value="1.34 A"/>
    <property type="chains" value="A/B=1-228"/>
</dbReference>
<dbReference type="PDB" id="3QMR">
    <property type="method" value="X-ray"/>
    <property type="resolution" value="1.32 A"/>
    <property type="chains" value="A/B=1-228"/>
</dbReference>
<dbReference type="PDB" id="3QMS">
    <property type="method" value="X-ray"/>
    <property type="resolution" value="1.32 A"/>
    <property type="chains" value="A/B=1-228"/>
</dbReference>
<dbReference type="PDB" id="3QMT">
    <property type="method" value="X-ray"/>
    <property type="resolution" value="1.32 A"/>
    <property type="chains" value="A/B=1-228"/>
</dbReference>
<dbReference type="PDB" id="3RLU">
    <property type="method" value="X-ray"/>
    <property type="resolution" value="1.49 A"/>
    <property type="chains" value="A/B=1-228"/>
</dbReference>
<dbReference type="PDB" id="3RLV">
    <property type="method" value="X-ray"/>
    <property type="resolution" value="1.42 A"/>
    <property type="chains" value="A/B=1-228"/>
</dbReference>
<dbReference type="PDB" id="3SEC">
    <property type="method" value="X-ray"/>
    <property type="resolution" value="1.70 A"/>
    <property type="chains" value="A=1-226"/>
</dbReference>
<dbReference type="PDB" id="3SGU">
    <property type="method" value="X-ray"/>
    <property type="resolution" value="1.70 A"/>
    <property type="chains" value="A=1-226"/>
</dbReference>
<dbReference type="PDB" id="3SIZ">
    <property type="method" value="X-ray"/>
    <property type="resolution" value="1.32 A"/>
    <property type="chains" value="A/B=1-228"/>
</dbReference>
<dbReference type="PDB" id="3SJ3">
    <property type="method" value="X-ray"/>
    <property type="resolution" value="1.26 A"/>
    <property type="chains" value="A/B=1-228"/>
</dbReference>
<dbReference type="PDB" id="3SSJ">
    <property type="method" value="X-ray"/>
    <property type="resolution" value="1.40 A"/>
    <property type="chains" value="A=1-226"/>
</dbReference>
<dbReference type="PDB" id="3SW6">
    <property type="method" value="X-ray"/>
    <property type="resolution" value="1.50 A"/>
    <property type="chains" value="A=1-226"/>
</dbReference>
<dbReference type="PDB" id="3SY5">
    <property type="method" value="X-ray"/>
    <property type="resolution" value="1.32 A"/>
    <property type="chains" value="A/B=1-228"/>
</dbReference>
<dbReference type="PDB" id="3THQ">
    <property type="method" value="X-ray"/>
    <property type="resolution" value="1.50 A"/>
    <property type="chains" value="A/B=1-226"/>
</dbReference>
<dbReference type="PDB" id="3V1P">
    <property type="method" value="X-ray"/>
    <property type="resolution" value="1.37 A"/>
    <property type="chains" value="A/B=1-228"/>
</dbReference>
<dbReference type="PDB" id="3W07">
    <property type="method" value="X-ray"/>
    <property type="resolution" value="1.03 A"/>
    <property type="chains" value="A=1-228"/>
</dbReference>
<dbReference type="PDB" id="3WJW">
    <property type="method" value="X-ray"/>
    <property type="resolution" value="1.59 A"/>
    <property type="chains" value="A=1-228"/>
</dbReference>
<dbReference type="PDB" id="3WJX">
    <property type="method" value="X-ray"/>
    <property type="resolution" value="1.23 A"/>
    <property type="chains" value="A=1-228"/>
</dbReference>
<dbReference type="PDB" id="3WJY">
    <property type="method" value="X-ray"/>
    <property type="resolution" value="1.72 A"/>
    <property type="chains" value="A=1-228"/>
</dbReference>
<dbReference type="PDB" id="3WJZ">
    <property type="method" value="X-ray"/>
    <property type="resolution" value="1.39 A"/>
    <property type="chains" value="A=1-228"/>
</dbReference>
<dbReference type="PDB" id="3WK0">
    <property type="method" value="X-ray"/>
    <property type="resolution" value="1.41 A"/>
    <property type="chains" value="A=1-228"/>
</dbReference>
<dbReference type="PDB" id="3WK1">
    <property type="method" value="X-ray"/>
    <property type="resolution" value="1.60 A"/>
    <property type="chains" value="A=1-228"/>
</dbReference>
<dbReference type="PDB" id="3WK2">
    <property type="method" value="X-ray"/>
    <property type="resolution" value="1.69 A"/>
    <property type="chains" value="A=1-228"/>
</dbReference>
<dbReference type="PDB" id="3WK3">
    <property type="method" value="X-ray"/>
    <property type="resolution" value="1.26 A"/>
    <property type="chains" value="A=1-228"/>
</dbReference>
<dbReference type="PDB" id="4FX6">
    <property type="method" value="X-ray"/>
    <property type="resolution" value="1.53 A"/>
    <property type="chains" value="M/N=1-228"/>
</dbReference>
<dbReference type="PDB" id="4FX8">
    <property type="method" value="X-ray"/>
    <property type="resolution" value="1.94 A"/>
    <property type="chains" value="A/B=1-228"/>
</dbReference>
<dbReference type="PDB" id="4FXR">
    <property type="method" value="X-ray"/>
    <property type="resolution" value="1.71 A"/>
    <property type="chains" value="A/B=1-228"/>
</dbReference>
<dbReference type="PDB" id="4GC4">
    <property type="method" value="X-ray"/>
    <property type="resolution" value="1.42 A"/>
    <property type="chains" value="A/B=1-228"/>
</dbReference>
<dbReference type="PDB" id="4LC6">
    <property type="method" value="X-ray"/>
    <property type="resolution" value="1.32 A"/>
    <property type="chains" value="A/B=1-228"/>
</dbReference>
<dbReference type="PDB" id="4LC8">
    <property type="method" value="X-ray"/>
    <property type="resolution" value="1.32 A"/>
    <property type="chains" value="A/B=1-228"/>
</dbReference>
<dbReference type="PDB" id="4LW7">
    <property type="method" value="X-ray"/>
    <property type="resolution" value="1.42 A"/>
    <property type="chains" value="A/B=1-228"/>
</dbReference>
<dbReference type="PDB" id="4NT0">
    <property type="method" value="X-ray"/>
    <property type="resolution" value="1.77 A"/>
    <property type="chains" value="A/B=1-228"/>
</dbReference>
<dbReference type="PDB" id="4NUW">
    <property type="method" value="X-ray"/>
    <property type="resolution" value="1.59 A"/>
    <property type="chains" value="A/B=1-228"/>
</dbReference>
<dbReference type="PDB" id="4NX5">
    <property type="method" value="X-ray"/>
    <property type="resolution" value="1.59 A"/>
    <property type="chains" value="A/B=1-228"/>
</dbReference>
<dbReference type="PDB" id="4O11">
    <property type="method" value="X-ray"/>
    <property type="resolution" value="1.59 A"/>
    <property type="chains" value="A/B=1-228"/>
</dbReference>
<dbReference type="PDB" id="4O8R">
    <property type="method" value="X-ray"/>
    <property type="resolution" value="2.29 A"/>
    <property type="chains" value="A/B/C/D/E/F/G/H/I/J/K/L/M=1-228"/>
</dbReference>
<dbReference type="PDBsum" id="1DV7"/>
<dbReference type="PDBsum" id="1DVJ"/>
<dbReference type="PDBsum" id="1KLY"/>
<dbReference type="PDBsum" id="1KLZ"/>
<dbReference type="PDBsum" id="1KM0"/>
<dbReference type="PDBsum" id="1KM1"/>
<dbReference type="PDBsum" id="1KM2"/>
<dbReference type="PDBsum" id="1KM3"/>
<dbReference type="PDBsum" id="1KM4"/>
<dbReference type="PDBsum" id="1KM5"/>
<dbReference type="PDBsum" id="1KM6"/>
<dbReference type="PDBsum" id="1LOL"/>
<dbReference type="PDBsum" id="1LOQ"/>
<dbReference type="PDBsum" id="1LOR"/>
<dbReference type="PDBsum" id="1LOS"/>
<dbReference type="PDBsum" id="1LP6"/>
<dbReference type="PDBsum" id="1X1Z"/>
<dbReference type="PDBsum" id="2E6Y"/>
<dbReference type="PDBsum" id="2ZZ1"/>
<dbReference type="PDBsum" id="2ZZ2"/>
<dbReference type="PDBsum" id="2ZZ3"/>
<dbReference type="PDBsum" id="2ZZ4"/>
<dbReference type="PDBsum" id="2ZZ5"/>
<dbReference type="PDBsum" id="2ZZ6"/>
<dbReference type="PDBsum" id="2ZZ7"/>
<dbReference type="PDBsum" id="3G18"/>
<dbReference type="PDBsum" id="3G1A"/>
<dbReference type="PDBsum" id="3G1D"/>
<dbReference type="PDBsum" id="3G1F"/>
<dbReference type="PDBsum" id="3G1H"/>
<dbReference type="PDBsum" id="3G1S"/>
<dbReference type="PDBsum" id="3G1V"/>
<dbReference type="PDBsum" id="3G1X"/>
<dbReference type="PDBsum" id="3G1Y"/>
<dbReference type="PDBsum" id="3G22"/>
<dbReference type="PDBsum" id="3G24"/>
<dbReference type="PDBsum" id="3LHT"/>
<dbReference type="PDBsum" id="3LHU"/>
<dbReference type="PDBsum" id="3LHV"/>
<dbReference type="PDBsum" id="3LHW"/>
<dbReference type="PDBsum" id="3LHY"/>
<dbReference type="PDBsum" id="3LHZ"/>
<dbReference type="PDBsum" id="3LI0"/>
<dbReference type="PDBsum" id="3LI1"/>
<dbReference type="PDBsum" id="3LLD"/>
<dbReference type="PDBsum" id="3LLF"/>
<dbReference type="PDBsum" id="3LTP"/>
<dbReference type="PDBsum" id="3LTS"/>
<dbReference type="PDBsum" id="3LTY"/>
<dbReference type="PDBsum" id="3LV5"/>
<dbReference type="PDBsum" id="3LV6"/>
<dbReference type="PDBsum" id="3M1Z"/>
<dbReference type="PDBsum" id="3M41"/>
<dbReference type="PDBsum" id="3M43"/>
<dbReference type="PDBsum" id="3M44"/>
<dbReference type="PDBsum" id="3M47"/>
<dbReference type="PDBsum" id="3M5X"/>
<dbReference type="PDBsum" id="3M5Y"/>
<dbReference type="PDBsum" id="3M5Z"/>
<dbReference type="PDBsum" id="3NQ6"/>
<dbReference type="PDBsum" id="3NQ7"/>
<dbReference type="PDBsum" id="3NQA"/>
<dbReference type="PDBsum" id="3NQC"/>
<dbReference type="PDBsum" id="3NQD"/>
<dbReference type="PDBsum" id="3NQE"/>
<dbReference type="PDBsum" id="3NQF"/>
<dbReference type="PDBsum" id="3NQG"/>
<dbReference type="PDBsum" id="3NQM"/>
<dbReference type="PDBsum" id="3P5Y"/>
<dbReference type="PDBsum" id="3P5Z"/>
<dbReference type="PDBsum" id="3P60"/>
<dbReference type="PDBsum" id="3P61"/>
<dbReference type="PDBsum" id="3PBU"/>
<dbReference type="PDBsum" id="3PBV"/>
<dbReference type="PDBsum" id="3PBW"/>
<dbReference type="PDBsum" id="3PBY"/>
<dbReference type="PDBsum" id="3PC0"/>
<dbReference type="PDBsum" id="3QEZ"/>
<dbReference type="PDBsum" id="3QF0"/>
<dbReference type="PDBsum" id="3QMR"/>
<dbReference type="PDBsum" id="3QMS"/>
<dbReference type="PDBsum" id="3QMT"/>
<dbReference type="PDBsum" id="3RLU"/>
<dbReference type="PDBsum" id="3RLV"/>
<dbReference type="PDBsum" id="3SEC"/>
<dbReference type="PDBsum" id="3SGU"/>
<dbReference type="PDBsum" id="3SIZ"/>
<dbReference type="PDBsum" id="3SJ3"/>
<dbReference type="PDBsum" id="3SSJ"/>
<dbReference type="PDBsum" id="3SW6"/>
<dbReference type="PDBsum" id="3SY5"/>
<dbReference type="PDBsum" id="3THQ"/>
<dbReference type="PDBsum" id="3V1P"/>
<dbReference type="PDBsum" id="3W07"/>
<dbReference type="PDBsum" id="3WJW"/>
<dbReference type="PDBsum" id="3WJX"/>
<dbReference type="PDBsum" id="3WJY"/>
<dbReference type="PDBsum" id="3WJZ"/>
<dbReference type="PDBsum" id="3WK0"/>
<dbReference type="PDBsum" id="3WK1"/>
<dbReference type="PDBsum" id="3WK2"/>
<dbReference type="PDBsum" id="3WK3"/>
<dbReference type="PDBsum" id="4FX6"/>
<dbReference type="PDBsum" id="4FX8"/>
<dbReference type="PDBsum" id="4FXR"/>
<dbReference type="PDBsum" id="4GC4"/>
<dbReference type="PDBsum" id="4LC6"/>
<dbReference type="PDBsum" id="4LC8"/>
<dbReference type="PDBsum" id="4LW7"/>
<dbReference type="PDBsum" id="4NT0"/>
<dbReference type="PDBsum" id="4NUW"/>
<dbReference type="PDBsum" id="4NX5"/>
<dbReference type="PDBsum" id="4O11"/>
<dbReference type="PDBsum" id="4O8R"/>
<dbReference type="SMR" id="O26232"/>
<dbReference type="FunCoup" id="O26232">
    <property type="interactions" value="90"/>
</dbReference>
<dbReference type="STRING" id="187420.MTH_129"/>
<dbReference type="BindingDB" id="O26232"/>
<dbReference type="ChEMBL" id="CHEMBL5688"/>
<dbReference type="DrugCentral" id="O26232"/>
<dbReference type="PaxDb" id="187420-MTH_129"/>
<dbReference type="EnsemblBacteria" id="AAB84635">
    <property type="protein sequence ID" value="AAB84635"/>
    <property type="gene ID" value="MTH_129"/>
</dbReference>
<dbReference type="KEGG" id="mth:MTH_129"/>
<dbReference type="PATRIC" id="fig|187420.15.peg.102"/>
<dbReference type="HOGENOM" id="CLU_067069_2_0_2"/>
<dbReference type="InParanoid" id="O26232"/>
<dbReference type="BRENDA" id="4.1.1.23">
    <property type="organism ID" value="7219"/>
</dbReference>
<dbReference type="UniPathway" id="UPA00070">
    <property type="reaction ID" value="UER00120"/>
</dbReference>
<dbReference type="EvolutionaryTrace" id="O26232"/>
<dbReference type="Proteomes" id="UP000005223">
    <property type="component" value="Chromosome"/>
</dbReference>
<dbReference type="GO" id="GO:0005829">
    <property type="term" value="C:cytosol"/>
    <property type="evidence" value="ECO:0007669"/>
    <property type="project" value="TreeGrafter"/>
</dbReference>
<dbReference type="GO" id="GO:0004590">
    <property type="term" value="F:orotidine-5'-phosphate decarboxylase activity"/>
    <property type="evidence" value="ECO:0007669"/>
    <property type="project" value="UniProtKB-UniRule"/>
</dbReference>
<dbReference type="GO" id="GO:0006207">
    <property type="term" value="P:'de novo' pyrimidine nucleobase biosynthetic process"/>
    <property type="evidence" value="ECO:0007669"/>
    <property type="project" value="InterPro"/>
</dbReference>
<dbReference type="GO" id="GO:0044205">
    <property type="term" value="P:'de novo' UMP biosynthetic process"/>
    <property type="evidence" value="ECO:0007669"/>
    <property type="project" value="UniProtKB-UniRule"/>
</dbReference>
<dbReference type="CDD" id="cd04725">
    <property type="entry name" value="OMP_decarboxylase_like"/>
    <property type="match status" value="1"/>
</dbReference>
<dbReference type="Gene3D" id="3.20.20.70">
    <property type="entry name" value="Aldolase class I"/>
    <property type="match status" value="1"/>
</dbReference>
<dbReference type="HAMAP" id="MF_01200_A">
    <property type="entry name" value="OMPdecase_type1_A"/>
    <property type="match status" value="1"/>
</dbReference>
<dbReference type="InterPro" id="IPR013785">
    <property type="entry name" value="Aldolase_TIM"/>
</dbReference>
<dbReference type="InterPro" id="IPR014732">
    <property type="entry name" value="OMPdecase"/>
</dbReference>
<dbReference type="InterPro" id="IPR047595">
    <property type="entry name" value="OMPdecase_arc"/>
</dbReference>
<dbReference type="InterPro" id="IPR018089">
    <property type="entry name" value="OMPdecase_AS"/>
</dbReference>
<dbReference type="InterPro" id="IPR001754">
    <property type="entry name" value="OMPdeCOase_dom"/>
</dbReference>
<dbReference type="InterPro" id="IPR011060">
    <property type="entry name" value="RibuloseP-bd_barrel"/>
</dbReference>
<dbReference type="NCBIfam" id="NF010386">
    <property type="entry name" value="PRK13813.1"/>
    <property type="match status" value="1"/>
</dbReference>
<dbReference type="NCBIfam" id="TIGR01740">
    <property type="entry name" value="pyrF"/>
    <property type="match status" value="1"/>
</dbReference>
<dbReference type="PANTHER" id="PTHR32119">
    <property type="entry name" value="OROTIDINE 5'-PHOSPHATE DECARBOXYLASE"/>
    <property type="match status" value="1"/>
</dbReference>
<dbReference type="PANTHER" id="PTHR32119:SF2">
    <property type="entry name" value="OROTIDINE 5'-PHOSPHATE DECARBOXYLASE"/>
    <property type="match status" value="1"/>
</dbReference>
<dbReference type="Pfam" id="PF00215">
    <property type="entry name" value="OMPdecase"/>
    <property type="match status" value="1"/>
</dbReference>
<dbReference type="SMART" id="SM00934">
    <property type="entry name" value="OMPdecase"/>
    <property type="match status" value="1"/>
</dbReference>
<dbReference type="SUPFAM" id="SSF51366">
    <property type="entry name" value="Ribulose-phoshate binding barrel"/>
    <property type="match status" value="1"/>
</dbReference>
<dbReference type="PROSITE" id="PS00156">
    <property type="entry name" value="OMPDECASE"/>
    <property type="match status" value="1"/>
</dbReference>
<organism>
    <name type="scientific">Methanothermobacter thermautotrophicus (strain ATCC 29096 / DSM 1053 / JCM 10044 / NBRC 100330 / Delta H)</name>
    <name type="common">Methanobacterium thermoautotrophicum</name>
    <dbReference type="NCBI Taxonomy" id="187420"/>
    <lineage>
        <taxon>Archaea</taxon>
        <taxon>Methanobacteriati</taxon>
        <taxon>Methanobacteriota</taxon>
        <taxon>Methanomada group</taxon>
        <taxon>Methanobacteria</taxon>
        <taxon>Methanobacteriales</taxon>
        <taxon>Methanobacteriaceae</taxon>
        <taxon>Methanothermobacter</taxon>
    </lineage>
</organism>
<keyword id="KW-0002">3D-structure</keyword>
<keyword id="KW-0210">Decarboxylase</keyword>
<keyword id="KW-0456">Lyase</keyword>
<keyword id="KW-0665">Pyrimidine biosynthesis</keyword>
<keyword id="KW-1185">Reference proteome</keyword>